<gene>
    <name evidence="1" type="primary">udk</name>
    <name type="ordered locus">swp_2836</name>
</gene>
<evidence type="ECO:0000255" key="1">
    <source>
        <dbReference type="HAMAP-Rule" id="MF_00551"/>
    </source>
</evidence>
<dbReference type="EC" id="2.7.1.48" evidence="1"/>
<dbReference type="EMBL" id="CP000472">
    <property type="protein sequence ID" value="ACJ29562.1"/>
    <property type="molecule type" value="Genomic_DNA"/>
</dbReference>
<dbReference type="RefSeq" id="WP_020912916.1">
    <property type="nucleotide sequence ID" value="NC_011566.1"/>
</dbReference>
<dbReference type="SMR" id="B8CPI6"/>
<dbReference type="STRING" id="225849.swp_2836"/>
<dbReference type="KEGG" id="swp:swp_2836"/>
<dbReference type="eggNOG" id="COG0572">
    <property type="taxonomic scope" value="Bacteria"/>
</dbReference>
<dbReference type="HOGENOM" id="CLU_021278_1_2_6"/>
<dbReference type="OrthoDB" id="9777642at2"/>
<dbReference type="UniPathway" id="UPA00574">
    <property type="reaction ID" value="UER00637"/>
</dbReference>
<dbReference type="UniPathway" id="UPA00579">
    <property type="reaction ID" value="UER00640"/>
</dbReference>
<dbReference type="Proteomes" id="UP000000753">
    <property type="component" value="Chromosome"/>
</dbReference>
<dbReference type="GO" id="GO:0005737">
    <property type="term" value="C:cytoplasm"/>
    <property type="evidence" value="ECO:0007669"/>
    <property type="project" value="UniProtKB-SubCell"/>
</dbReference>
<dbReference type="GO" id="GO:0005524">
    <property type="term" value="F:ATP binding"/>
    <property type="evidence" value="ECO:0007669"/>
    <property type="project" value="UniProtKB-UniRule"/>
</dbReference>
<dbReference type="GO" id="GO:0043771">
    <property type="term" value="F:cytidine kinase activity"/>
    <property type="evidence" value="ECO:0007669"/>
    <property type="project" value="RHEA"/>
</dbReference>
<dbReference type="GO" id="GO:0004849">
    <property type="term" value="F:uridine kinase activity"/>
    <property type="evidence" value="ECO:0007669"/>
    <property type="project" value="UniProtKB-UniRule"/>
</dbReference>
<dbReference type="GO" id="GO:0044211">
    <property type="term" value="P:CTP salvage"/>
    <property type="evidence" value="ECO:0007669"/>
    <property type="project" value="UniProtKB-UniRule"/>
</dbReference>
<dbReference type="GO" id="GO:0044206">
    <property type="term" value="P:UMP salvage"/>
    <property type="evidence" value="ECO:0007669"/>
    <property type="project" value="UniProtKB-UniRule"/>
</dbReference>
<dbReference type="CDD" id="cd02023">
    <property type="entry name" value="UMPK"/>
    <property type="match status" value="1"/>
</dbReference>
<dbReference type="Gene3D" id="3.40.50.300">
    <property type="entry name" value="P-loop containing nucleotide triphosphate hydrolases"/>
    <property type="match status" value="1"/>
</dbReference>
<dbReference type="HAMAP" id="MF_00551">
    <property type="entry name" value="Uridine_kinase"/>
    <property type="match status" value="1"/>
</dbReference>
<dbReference type="InterPro" id="IPR027417">
    <property type="entry name" value="P-loop_NTPase"/>
</dbReference>
<dbReference type="InterPro" id="IPR006083">
    <property type="entry name" value="PRK/URK"/>
</dbReference>
<dbReference type="InterPro" id="IPR026008">
    <property type="entry name" value="Uridine_kinase"/>
</dbReference>
<dbReference type="InterPro" id="IPR000764">
    <property type="entry name" value="Uridine_kinase-like"/>
</dbReference>
<dbReference type="NCBIfam" id="NF004018">
    <property type="entry name" value="PRK05480.1"/>
    <property type="match status" value="1"/>
</dbReference>
<dbReference type="NCBIfam" id="TIGR00235">
    <property type="entry name" value="udk"/>
    <property type="match status" value="1"/>
</dbReference>
<dbReference type="PANTHER" id="PTHR10285">
    <property type="entry name" value="URIDINE KINASE"/>
    <property type="match status" value="1"/>
</dbReference>
<dbReference type="Pfam" id="PF00485">
    <property type="entry name" value="PRK"/>
    <property type="match status" value="1"/>
</dbReference>
<dbReference type="PRINTS" id="PR00988">
    <property type="entry name" value="URIDINKINASE"/>
</dbReference>
<dbReference type="SUPFAM" id="SSF52540">
    <property type="entry name" value="P-loop containing nucleoside triphosphate hydrolases"/>
    <property type="match status" value="1"/>
</dbReference>
<sequence length="212" mass="23951">MNSKQCVVIAIAGASASGKSLIAKTIYEELCRDLGTDQIGVIAEDAYYRDQGHLSMDERVLTNYDHPKALDHELLCQHLQALKDGNPVDIPVYSYTEHTRTDEKVNLTPKKVIILEGILLLTDPALRDQMDASVFMDTPLDICFMRRLSRDVAERGRTMESVMSQYTETVRPMFLQFIEPSKQYADIIVPRGGKNRIATDILKARIQHLLAK</sequence>
<name>URK_SHEPW</name>
<protein>
    <recommendedName>
        <fullName evidence="1">Uridine kinase</fullName>
        <ecNumber evidence="1">2.7.1.48</ecNumber>
    </recommendedName>
    <alternativeName>
        <fullName evidence="1">Cytidine monophosphokinase</fullName>
    </alternativeName>
    <alternativeName>
        <fullName evidence="1">Uridine monophosphokinase</fullName>
    </alternativeName>
</protein>
<organism>
    <name type="scientific">Shewanella piezotolerans (strain WP3 / JCM 13877)</name>
    <dbReference type="NCBI Taxonomy" id="225849"/>
    <lineage>
        <taxon>Bacteria</taxon>
        <taxon>Pseudomonadati</taxon>
        <taxon>Pseudomonadota</taxon>
        <taxon>Gammaproteobacteria</taxon>
        <taxon>Alteromonadales</taxon>
        <taxon>Shewanellaceae</taxon>
        <taxon>Shewanella</taxon>
    </lineage>
</organism>
<proteinExistence type="inferred from homology"/>
<accession>B8CPI6</accession>
<comment type="catalytic activity">
    <reaction evidence="1">
        <text>uridine + ATP = UMP + ADP + H(+)</text>
        <dbReference type="Rhea" id="RHEA:16825"/>
        <dbReference type="ChEBI" id="CHEBI:15378"/>
        <dbReference type="ChEBI" id="CHEBI:16704"/>
        <dbReference type="ChEBI" id="CHEBI:30616"/>
        <dbReference type="ChEBI" id="CHEBI:57865"/>
        <dbReference type="ChEBI" id="CHEBI:456216"/>
        <dbReference type="EC" id="2.7.1.48"/>
    </reaction>
</comment>
<comment type="catalytic activity">
    <reaction evidence="1">
        <text>cytidine + ATP = CMP + ADP + H(+)</text>
        <dbReference type="Rhea" id="RHEA:24674"/>
        <dbReference type="ChEBI" id="CHEBI:15378"/>
        <dbReference type="ChEBI" id="CHEBI:17562"/>
        <dbReference type="ChEBI" id="CHEBI:30616"/>
        <dbReference type="ChEBI" id="CHEBI:60377"/>
        <dbReference type="ChEBI" id="CHEBI:456216"/>
        <dbReference type="EC" id="2.7.1.48"/>
    </reaction>
</comment>
<comment type="pathway">
    <text evidence="1">Pyrimidine metabolism; CTP biosynthesis via salvage pathway; CTP from cytidine: step 1/3.</text>
</comment>
<comment type="pathway">
    <text evidence="1">Pyrimidine metabolism; UMP biosynthesis via salvage pathway; UMP from uridine: step 1/1.</text>
</comment>
<comment type="subcellular location">
    <subcellularLocation>
        <location evidence="1">Cytoplasm</location>
    </subcellularLocation>
</comment>
<comment type="similarity">
    <text evidence="1">Belongs to the uridine kinase family.</text>
</comment>
<keyword id="KW-0067">ATP-binding</keyword>
<keyword id="KW-0963">Cytoplasm</keyword>
<keyword id="KW-0418">Kinase</keyword>
<keyword id="KW-0547">Nucleotide-binding</keyword>
<keyword id="KW-0808">Transferase</keyword>
<reference key="1">
    <citation type="journal article" date="2008" name="PLoS ONE">
        <title>Environmental adaptation: genomic analysis of the piezotolerant and psychrotolerant deep-sea iron reducing bacterium Shewanella piezotolerans WP3.</title>
        <authorList>
            <person name="Wang F."/>
            <person name="Wang J."/>
            <person name="Jian H."/>
            <person name="Zhang B."/>
            <person name="Li S."/>
            <person name="Wang F."/>
            <person name="Zeng X."/>
            <person name="Gao L."/>
            <person name="Bartlett D.H."/>
            <person name="Yu J."/>
            <person name="Hu S."/>
            <person name="Xiao X."/>
        </authorList>
    </citation>
    <scope>NUCLEOTIDE SEQUENCE [LARGE SCALE GENOMIC DNA]</scope>
    <source>
        <strain>WP3 / JCM 13877</strain>
    </source>
</reference>
<feature type="chain" id="PRO_1000129089" description="Uridine kinase">
    <location>
        <begin position="1"/>
        <end position="212"/>
    </location>
</feature>
<feature type="binding site" evidence="1">
    <location>
        <begin position="13"/>
        <end position="20"/>
    </location>
    <ligand>
        <name>ATP</name>
        <dbReference type="ChEBI" id="CHEBI:30616"/>
    </ligand>
</feature>